<reference key="1">
    <citation type="submission" date="1997-01" db="EMBL/GenBank/DDBJ databases">
        <title>Sequence of minutes 4-25 of Escherichia coli.</title>
        <authorList>
            <person name="Chung E."/>
            <person name="Allen E."/>
            <person name="Araujo R."/>
            <person name="Aparicio A.M."/>
            <person name="Davis K."/>
            <person name="Duncan M."/>
            <person name="Federspiel N."/>
            <person name="Hyman R."/>
            <person name="Kalman S."/>
            <person name="Komp C."/>
            <person name="Kurdi O."/>
            <person name="Lew H."/>
            <person name="Lin D."/>
            <person name="Namath A."/>
            <person name="Oefner P."/>
            <person name="Roberts D."/>
            <person name="Schramm S."/>
            <person name="Davis R.W."/>
        </authorList>
    </citation>
    <scope>NUCLEOTIDE SEQUENCE [LARGE SCALE GENOMIC DNA]</scope>
    <source>
        <strain>K12 / MG1655 / ATCC 47076</strain>
    </source>
</reference>
<reference key="2">
    <citation type="journal article" date="1997" name="Science">
        <title>The complete genome sequence of Escherichia coli K-12.</title>
        <authorList>
            <person name="Blattner F.R."/>
            <person name="Plunkett G. III"/>
            <person name="Bloch C.A."/>
            <person name="Perna N.T."/>
            <person name="Burland V."/>
            <person name="Riley M."/>
            <person name="Collado-Vides J."/>
            <person name="Glasner J.D."/>
            <person name="Rode C.K."/>
            <person name="Mayhew G.F."/>
            <person name="Gregor J."/>
            <person name="Davis N.W."/>
            <person name="Kirkpatrick H.A."/>
            <person name="Goeden M.A."/>
            <person name="Rose D.J."/>
            <person name="Mau B."/>
            <person name="Shao Y."/>
        </authorList>
    </citation>
    <scope>NUCLEOTIDE SEQUENCE [LARGE SCALE GENOMIC DNA]</scope>
    <source>
        <strain>K12 / MG1655 / ATCC 47076</strain>
    </source>
</reference>
<reference key="3">
    <citation type="journal article" date="2006" name="Mol. Syst. Biol.">
        <title>Highly accurate genome sequences of Escherichia coli K-12 strains MG1655 and W3110.</title>
        <authorList>
            <person name="Hayashi K."/>
            <person name="Morooka N."/>
            <person name="Yamamoto Y."/>
            <person name="Fujita K."/>
            <person name="Isono K."/>
            <person name="Choi S."/>
            <person name="Ohtsubo E."/>
            <person name="Baba T."/>
            <person name="Wanner B.L."/>
            <person name="Mori H."/>
            <person name="Horiuchi T."/>
        </authorList>
    </citation>
    <scope>NUCLEOTIDE SEQUENCE [LARGE SCALE GENOMIC DNA]</scope>
    <source>
        <strain>K12 / W3110 / ATCC 27325 / DSM 5911</strain>
    </source>
</reference>
<gene>
    <name type="primary">yahL</name>
    <name type="ordered locus">b0326</name>
    <name type="ordered locus">JW0318</name>
</gene>
<feature type="chain" id="PRO_0000168579" description="Uncharacterized protein YahL">
    <location>
        <begin position="1"/>
        <end position="271"/>
    </location>
</feature>
<sequence length="271" mass="31793">MISLKAPHNNLMPYTQQSILNTVKNNQLPEDIKSSLVSCVDIFKVLIKQYYDYPYDCRDDLVDDDKLIHLMAAVRDCEWSDDNALTINVQFNDFPGFYDWMDYPDHPVKFVFHILENQKGTVWVYDQDDAFLDIKANVQAGRFTGLKKLVQFIDSVRTDCKCILLEYHMPLLRIFPKGKECMHVEKWLREMSSIPETDAPIKQALAHGLLLHLKNIYPVFPESLVMLLLSVLDVKTYRDDARLNEWISNRVQELGDRYYPVNKHVKIRYTL</sequence>
<name>YAHL_ECOLI</name>
<dbReference type="EMBL" id="U73857">
    <property type="protein sequence ID" value="AAB18052.1"/>
    <property type="molecule type" value="Genomic_DNA"/>
</dbReference>
<dbReference type="EMBL" id="U00096">
    <property type="protein sequence ID" value="AAC73429.1"/>
    <property type="molecule type" value="Genomic_DNA"/>
</dbReference>
<dbReference type="EMBL" id="AP009048">
    <property type="protein sequence ID" value="BAE76109.1"/>
    <property type="molecule type" value="Genomic_DNA"/>
</dbReference>
<dbReference type="PIR" id="F64759">
    <property type="entry name" value="F64759"/>
</dbReference>
<dbReference type="RefSeq" id="NP_414860.1">
    <property type="nucleotide sequence ID" value="NC_000913.3"/>
</dbReference>
<dbReference type="RefSeq" id="WP_001301260.1">
    <property type="nucleotide sequence ID" value="NZ_LN832404.1"/>
</dbReference>
<dbReference type="BioGRID" id="4259803">
    <property type="interactions" value="17"/>
</dbReference>
<dbReference type="FunCoup" id="P77393">
    <property type="interactions" value="3"/>
</dbReference>
<dbReference type="IntAct" id="P77393">
    <property type="interactions" value="3"/>
</dbReference>
<dbReference type="STRING" id="511145.b0326"/>
<dbReference type="PaxDb" id="511145-b0326"/>
<dbReference type="EnsemblBacteria" id="AAC73429">
    <property type="protein sequence ID" value="AAC73429"/>
    <property type="gene ID" value="b0326"/>
</dbReference>
<dbReference type="GeneID" id="944970"/>
<dbReference type="KEGG" id="ecj:JW0318"/>
<dbReference type="KEGG" id="eco:b0326"/>
<dbReference type="KEGG" id="ecoc:C3026_01600"/>
<dbReference type="KEGG" id="ecoc:C3026_24770"/>
<dbReference type="PATRIC" id="fig|511145.12.peg.333"/>
<dbReference type="EchoBASE" id="EB3365"/>
<dbReference type="HOGENOM" id="CLU_089589_0_0_6"/>
<dbReference type="InParanoid" id="P77393"/>
<dbReference type="OMA" id="VRDCEWL"/>
<dbReference type="BioCyc" id="EcoCyc:G6191-MONOMER"/>
<dbReference type="PRO" id="PR:P77393"/>
<dbReference type="Proteomes" id="UP000000625">
    <property type="component" value="Chromosome"/>
</dbReference>
<proteinExistence type="predicted"/>
<accession>P77393</accession>
<accession>Q2MC97</accession>
<organism>
    <name type="scientific">Escherichia coli (strain K12)</name>
    <dbReference type="NCBI Taxonomy" id="83333"/>
    <lineage>
        <taxon>Bacteria</taxon>
        <taxon>Pseudomonadati</taxon>
        <taxon>Pseudomonadota</taxon>
        <taxon>Gammaproteobacteria</taxon>
        <taxon>Enterobacterales</taxon>
        <taxon>Enterobacteriaceae</taxon>
        <taxon>Escherichia</taxon>
    </lineage>
</organism>
<protein>
    <recommendedName>
        <fullName>Uncharacterized protein YahL</fullName>
    </recommendedName>
</protein>
<keyword id="KW-1185">Reference proteome</keyword>